<evidence type="ECO:0000255" key="1">
    <source>
        <dbReference type="HAMAP-Rule" id="MF_00052"/>
    </source>
</evidence>
<evidence type="ECO:0000255" key="2">
    <source>
        <dbReference type="PROSITE-ProRule" id="PRU01319"/>
    </source>
</evidence>
<comment type="function">
    <text evidence="1">Endonuclease that specifically degrades the RNA of RNA-DNA hybrids.</text>
</comment>
<comment type="catalytic activity">
    <reaction evidence="1">
        <text>Endonucleolytic cleavage to 5'-phosphomonoester.</text>
        <dbReference type="EC" id="3.1.26.4"/>
    </reaction>
</comment>
<comment type="cofactor">
    <cofactor evidence="1">
        <name>Mn(2+)</name>
        <dbReference type="ChEBI" id="CHEBI:29035"/>
    </cofactor>
    <cofactor evidence="1">
        <name>Mg(2+)</name>
        <dbReference type="ChEBI" id="CHEBI:18420"/>
    </cofactor>
    <text evidence="1">Manganese or magnesium. Binds 1 divalent metal ion per monomer in the absence of substrate. May bind a second metal ion after substrate binding.</text>
</comment>
<comment type="subcellular location">
    <subcellularLocation>
        <location evidence="1">Cytoplasm</location>
    </subcellularLocation>
</comment>
<comment type="similarity">
    <text evidence="1">Belongs to the RNase HII family.</text>
</comment>
<sequence>MATARKPRGGAGGAAQPALDFDAPGEIVCGVDEAGRGPLAGPVVAAAVVLDPARPIVGLDDSKALSAKKRERLFDEIVAHALAYCVASASVEEIDTLNILHATMLAMKRAVEGLAVRPTLAKIDGNRCPMLAIRSEAIVGGDALVPSISAASILAKVTRDRMLVELHQQFPMYGFDAHAGYGTPQHLAALREHGPCEHHRRSFAPVREAFDLIR</sequence>
<accession>Q2SWY4</accession>
<feature type="chain" id="PRO_0000235709" description="Ribonuclease HII">
    <location>
        <begin position="1"/>
        <end position="214"/>
    </location>
</feature>
<feature type="domain" description="RNase H type-2" evidence="2">
    <location>
        <begin position="26"/>
        <end position="214"/>
    </location>
</feature>
<feature type="binding site" evidence="1">
    <location>
        <position position="32"/>
    </location>
    <ligand>
        <name>a divalent metal cation</name>
        <dbReference type="ChEBI" id="CHEBI:60240"/>
    </ligand>
</feature>
<feature type="binding site" evidence="1">
    <location>
        <position position="33"/>
    </location>
    <ligand>
        <name>a divalent metal cation</name>
        <dbReference type="ChEBI" id="CHEBI:60240"/>
    </ligand>
</feature>
<feature type="binding site" evidence="1">
    <location>
        <position position="124"/>
    </location>
    <ligand>
        <name>a divalent metal cation</name>
        <dbReference type="ChEBI" id="CHEBI:60240"/>
    </ligand>
</feature>
<dbReference type="EC" id="3.1.26.4" evidence="1"/>
<dbReference type="EMBL" id="CP000086">
    <property type="protein sequence ID" value="ABC39390.1"/>
    <property type="molecule type" value="Genomic_DNA"/>
</dbReference>
<dbReference type="RefSeq" id="WP_009890463.1">
    <property type="nucleotide sequence ID" value="NZ_CP008785.1"/>
</dbReference>
<dbReference type="SMR" id="Q2SWY4"/>
<dbReference type="GeneID" id="45121769"/>
<dbReference type="KEGG" id="bte:BTH_I2041"/>
<dbReference type="HOGENOM" id="CLU_036532_3_2_4"/>
<dbReference type="Proteomes" id="UP000001930">
    <property type="component" value="Chromosome I"/>
</dbReference>
<dbReference type="GO" id="GO:0005737">
    <property type="term" value="C:cytoplasm"/>
    <property type="evidence" value="ECO:0007669"/>
    <property type="project" value="UniProtKB-SubCell"/>
</dbReference>
<dbReference type="GO" id="GO:0032299">
    <property type="term" value="C:ribonuclease H2 complex"/>
    <property type="evidence" value="ECO:0007669"/>
    <property type="project" value="TreeGrafter"/>
</dbReference>
<dbReference type="GO" id="GO:0030145">
    <property type="term" value="F:manganese ion binding"/>
    <property type="evidence" value="ECO:0007669"/>
    <property type="project" value="UniProtKB-UniRule"/>
</dbReference>
<dbReference type="GO" id="GO:0003723">
    <property type="term" value="F:RNA binding"/>
    <property type="evidence" value="ECO:0007669"/>
    <property type="project" value="InterPro"/>
</dbReference>
<dbReference type="GO" id="GO:0004523">
    <property type="term" value="F:RNA-DNA hybrid ribonuclease activity"/>
    <property type="evidence" value="ECO:0007669"/>
    <property type="project" value="UniProtKB-UniRule"/>
</dbReference>
<dbReference type="GO" id="GO:0043137">
    <property type="term" value="P:DNA replication, removal of RNA primer"/>
    <property type="evidence" value="ECO:0007669"/>
    <property type="project" value="TreeGrafter"/>
</dbReference>
<dbReference type="GO" id="GO:0006298">
    <property type="term" value="P:mismatch repair"/>
    <property type="evidence" value="ECO:0007669"/>
    <property type="project" value="TreeGrafter"/>
</dbReference>
<dbReference type="CDD" id="cd07182">
    <property type="entry name" value="RNase_HII_bacteria_HII_like"/>
    <property type="match status" value="1"/>
</dbReference>
<dbReference type="FunFam" id="3.30.420.10:FF:000006">
    <property type="entry name" value="Ribonuclease HII"/>
    <property type="match status" value="1"/>
</dbReference>
<dbReference type="Gene3D" id="3.30.420.10">
    <property type="entry name" value="Ribonuclease H-like superfamily/Ribonuclease H"/>
    <property type="match status" value="1"/>
</dbReference>
<dbReference type="HAMAP" id="MF_00052_B">
    <property type="entry name" value="RNase_HII_B"/>
    <property type="match status" value="1"/>
</dbReference>
<dbReference type="InterPro" id="IPR022898">
    <property type="entry name" value="RNase_HII"/>
</dbReference>
<dbReference type="InterPro" id="IPR001352">
    <property type="entry name" value="RNase_HII/HIII"/>
</dbReference>
<dbReference type="InterPro" id="IPR024567">
    <property type="entry name" value="RNase_HII/HIII_dom"/>
</dbReference>
<dbReference type="InterPro" id="IPR012337">
    <property type="entry name" value="RNaseH-like_sf"/>
</dbReference>
<dbReference type="InterPro" id="IPR036397">
    <property type="entry name" value="RNaseH_sf"/>
</dbReference>
<dbReference type="NCBIfam" id="NF000594">
    <property type="entry name" value="PRK00015.1-1"/>
    <property type="match status" value="1"/>
</dbReference>
<dbReference type="NCBIfam" id="NF000595">
    <property type="entry name" value="PRK00015.1-3"/>
    <property type="match status" value="1"/>
</dbReference>
<dbReference type="NCBIfam" id="NF000596">
    <property type="entry name" value="PRK00015.1-4"/>
    <property type="match status" value="1"/>
</dbReference>
<dbReference type="PANTHER" id="PTHR10954">
    <property type="entry name" value="RIBONUCLEASE H2 SUBUNIT A"/>
    <property type="match status" value="1"/>
</dbReference>
<dbReference type="PANTHER" id="PTHR10954:SF18">
    <property type="entry name" value="RIBONUCLEASE HII"/>
    <property type="match status" value="1"/>
</dbReference>
<dbReference type="Pfam" id="PF01351">
    <property type="entry name" value="RNase_HII"/>
    <property type="match status" value="1"/>
</dbReference>
<dbReference type="SUPFAM" id="SSF53098">
    <property type="entry name" value="Ribonuclease H-like"/>
    <property type="match status" value="1"/>
</dbReference>
<dbReference type="PROSITE" id="PS51975">
    <property type="entry name" value="RNASE_H_2"/>
    <property type="match status" value="1"/>
</dbReference>
<gene>
    <name evidence="1" type="primary">rnhB</name>
    <name type="ordered locus">BTH_I2041</name>
</gene>
<reference key="1">
    <citation type="journal article" date="2005" name="BMC Genomics">
        <title>Bacterial genome adaptation to niches: divergence of the potential virulence genes in three Burkholderia species of different survival strategies.</title>
        <authorList>
            <person name="Kim H.S."/>
            <person name="Schell M.A."/>
            <person name="Yu Y."/>
            <person name="Ulrich R.L."/>
            <person name="Sarria S.H."/>
            <person name="Nierman W.C."/>
            <person name="DeShazer D."/>
        </authorList>
    </citation>
    <scope>NUCLEOTIDE SEQUENCE [LARGE SCALE GENOMIC DNA]</scope>
    <source>
        <strain>ATCC 700388 / DSM 13276 / CCUG 48851 / CIP 106301 / E264</strain>
    </source>
</reference>
<keyword id="KW-0963">Cytoplasm</keyword>
<keyword id="KW-0255">Endonuclease</keyword>
<keyword id="KW-0378">Hydrolase</keyword>
<keyword id="KW-0464">Manganese</keyword>
<keyword id="KW-0479">Metal-binding</keyword>
<keyword id="KW-0540">Nuclease</keyword>
<proteinExistence type="inferred from homology"/>
<protein>
    <recommendedName>
        <fullName evidence="1">Ribonuclease HII</fullName>
        <shortName evidence="1">RNase HII</shortName>
        <ecNumber evidence="1">3.1.26.4</ecNumber>
    </recommendedName>
</protein>
<organism>
    <name type="scientific">Burkholderia thailandensis (strain ATCC 700388 / DSM 13276 / CCUG 48851 / CIP 106301 / E264)</name>
    <dbReference type="NCBI Taxonomy" id="271848"/>
    <lineage>
        <taxon>Bacteria</taxon>
        <taxon>Pseudomonadati</taxon>
        <taxon>Pseudomonadota</taxon>
        <taxon>Betaproteobacteria</taxon>
        <taxon>Burkholderiales</taxon>
        <taxon>Burkholderiaceae</taxon>
        <taxon>Burkholderia</taxon>
        <taxon>pseudomallei group</taxon>
    </lineage>
</organism>
<name>RNH2_BURTA</name>